<gene>
    <name evidence="1" type="primary">efp</name>
    <name type="ordered locus">SBO_4309</name>
</gene>
<reference key="1">
    <citation type="journal article" date="2005" name="Nucleic Acids Res.">
        <title>Genome dynamics and diversity of Shigella species, the etiologic agents of bacillary dysentery.</title>
        <authorList>
            <person name="Yang F."/>
            <person name="Yang J."/>
            <person name="Zhang X."/>
            <person name="Chen L."/>
            <person name="Jiang Y."/>
            <person name="Yan Y."/>
            <person name="Tang X."/>
            <person name="Wang J."/>
            <person name="Xiong Z."/>
            <person name="Dong J."/>
            <person name="Xue Y."/>
            <person name="Zhu Y."/>
            <person name="Xu X."/>
            <person name="Sun L."/>
            <person name="Chen S."/>
            <person name="Nie H."/>
            <person name="Peng J."/>
            <person name="Xu J."/>
            <person name="Wang Y."/>
            <person name="Yuan Z."/>
            <person name="Wen Y."/>
            <person name="Yao Z."/>
            <person name="Shen Y."/>
            <person name="Qiang B."/>
            <person name="Hou Y."/>
            <person name="Yu J."/>
            <person name="Jin Q."/>
        </authorList>
    </citation>
    <scope>NUCLEOTIDE SEQUENCE [LARGE SCALE GENOMIC DNA]</scope>
    <source>
        <strain>Sb227</strain>
    </source>
</reference>
<feature type="chain" id="PRO_1000010855" description="Elongation factor P">
    <location>
        <begin position="1"/>
        <end position="188"/>
    </location>
</feature>
<feature type="modified residue" description="N6-(3,6-diaminohexanoyl)-5-hydroxylysine" evidence="1">
    <location>
        <position position="34"/>
    </location>
</feature>
<proteinExistence type="inferred from homology"/>
<name>EFP_SHIBS</name>
<protein>
    <recommendedName>
        <fullName evidence="1">Elongation factor P</fullName>
        <shortName evidence="1">EF-P</shortName>
    </recommendedName>
</protein>
<accession>Q31T82</accession>
<dbReference type="EMBL" id="CP000036">
    <property type="protein sequence ID" value="ABB68726.1"/>
    <property type="molecule type" value="Genomic_DNA"/>
</dbReference>
<dbReference type="RefSeq" id="WP_000257278.1">
    <property type="nucleotide sequence ID" value="NC_007613.1"/>
</dbReference>
<dbReference type="SMR" id="Q31T82"/>
<dbReference type="GeneID" id="93777677"/>
<dbReference type="KEGG" id="sbo:SBO_4309"/>
<dbReference type="HOGENOM" id="CLU_074944_0_0_6"/>
<dbReference type="UniPathway" id="UPA00345"/>
<dbReference type="Proteomes" id="UP000007067">
    <property type="component" value="Chromosome"/>
</dbReference>
<dbReference type="GO" id="GO:0005829">
    <property type="term" value="C:cytosol"/>
    <property type="evidence" value="ECO:0007669"/>
    <property type="project" value="UniProtKB-ARBA"/>
</dbReference>
<dbReference type="GO" id="GO:0003746">
    <property type="term" value="F:translation elongation factor activity"/>
    <property type="evidence" value="ECO:0007669"/>
    <property type="project" value="UniProtKB-UniRule"/>
</dbReference>
<dbReference type="GO" id="GO:0043043">
    <property type="term" value="P:peptide biosynthetic process"/>
    <property type="evidence" value="ECO:0007669"/>
    <property type="project" value="InterPro"/>
</dbReference>
<dbReference type="CDD" id="cd04470">
    <property type="entry name" value="S1_EF-P_repeat_1"/>
    <property type="match status" value="1"/>
</dbReference>
<dbReference type="CDD" id="cd05794">
    <property type="entry name" value="S1_EF-P_repeat_2"/>
    <property type="match status" value="1"/>
</dbReference>
<dbReference type="FunFam" id="2.30.30.30:FF:000003">
    <property type="entry name" value="Elongation factor P"/>
    <property type="match status" value="1"/>
</dbReference>
<dbReference type="FunFam" id="2.40.50.140:FF:000004">
    <property type="entry name" value="Elongation factor P"/>
    <property type="match status" value="1"/>
</dbReference>
<dbReference type="FunFam" id="2.40.50.140:FF:000009">
    <property type="entry name" value="Elongation factor P"/>
    <property type="match status" value="1"/>
</dbReference>
<dbReference type="Gene3D" id="2.30.30.30">
    <property type="match status" value="1"/>
</dbReference>
<dbReference type="Gene3D" id="2.40.50.140">
    <property type="entry name" value="Nucleic acid-binding proteins"/>
    <property type="match status" value="2"/>
</dbReference>
<dbReference type="HAMAP" id="MF_00141">
    <property type="entry name" value="EF_P"/>
    <property type="match status" value="1"/>
</dbReference>
<dbReference type="InterPro" id="IPR015365">
    <property type="entry name" value="Elong-fact-P_C"/>
</dbReference>
<dbReference type="InterPro" id="IPR012340">
    <property type="entry name" value="NA-bd_OB-fold"/>
</dbReference>
<dbReference type="InterPro" id="IPR014722">
    <property type="entry name" value="Rib_uL2_dom2"/>
</dbReference>
<dbReference type="InterPro" id="IPR020599">
    <property type="entry name" value="Transl_elong_fac_P/YeiP"/>
</dbReference>
<dbReference type="InterPro" id="IPR013185">
    <property type="entry name" value="Transl_elong_KOW-like"/>
</dbReference>
<dbReference type="InterPro" id="IPR001059">
    <property type="entry name" value="Transl_elong_P/YeiP_cen"/>
</dbReference>
<dbReference type="InterPro" id="IPR013852">
    <property type="entry name" value="Transl_elong_P/YeiP_CS"/>
</dbReference>
<dbReference type="InterPro" id="IPR011768">
    <property type="entry name" value="Transl_elongation_fac_P"/>
</dbReference>
<dbReference type="InterPro" id="IPR008991">
    <property type="entry name" value="Translation_prot_SH3-like_sf"/>
</dbReference>
<dbReference type="NCBIfam" id="TIGR00038">
    <property type="entry name" value="efp"/>
    <property type="match status" value="1"/>
</dbReference>
<dbReference type="NCBIfam" id="NF001810">
    <property type="entry name" value="PRK00529.1"/>
    <property type="match status" value="1"/>
</dbReference>
<dbReference type="PANTHER" id="PTHR30053">
    <property type="entry name" value="ELONGATION FACTOR P"/>
    <property type="match status" value="1"/>
</dbReference>
<dbReference type="PANTHER" id="PTHR30053:SF12">
    <property type="entry name" value="ELONGATION FACTOR P (EF-P) FAMILY PROTEIN"/>
    <property type="match status" value="1"/>
</dbReference>
<dbReference type="Pfam" id="PF01132">
    <property type="entry name" value="EFP"/>
    <property type="match status" value="1"/>
</dbReference>
<dbReference type="Pfam" id="PF08207">
    <property type="entry name" value="EFP_N"/>
    <property type="match status" value="1"/>
</dbReference>
<dbReference type="Pfam" id="PF09285">
    <property type="entry name" value="Elong-fact-P_C"/>
    <property type="match status" value="1"/>
</dbReference>
<dbReference type="PIRSF" id="PIRSF005901">
    <property type="entry name" value="EF-P"/>
    <property type="match status" value="1"/>
</dbReference>
<dbReference type="SMART" id="SM01185">
    <property type="entry name" value="EFP"/>
    <property type="match status" value="1"/>
</dbReference>
<dbReference type="SMART" id="SM00841">
    <property type="entry name" value="Elong-fact-P_C"/>
    <property type="match status" value="1"/>
</dbReference>
<dbReference type="SUPFAM" id="SSF50249">
    <property type="entry name" value="Nucleic acid-binding proteins"/>
    <property type="match status" value="2"/>
</dbReference>
<dbReference type="SUPFAM" id="SSF50104">
    <property type="entry name" value="Translation proteins SH3-like domain"/>
    <property type="match status" value="1"/>
</dbReference>
<dbReference type="PROSITE" id="PS01275">
    <property type="entry name" value="EFP"/>
    <property type="match status" value="1"/>
</dbReference>
<sequence>MATYYSNDFRAGLKIMLDGEPYAVEASEFVKPGKGQAFARVKLRRLLTGTRVEKTFKSTDSAEGADVVDMNLTYLYNDGEFWHFMNNETFEQLSADAKAIGDNAKWLLDQAECIVTLWNGQPISVTPPNFVELEIVDTDPGLKGDTAGTGGKPATLSTGAVVKVPLFVQIGEVIKVDTRSGEYVSRVK</sequence>
<organism>
    <name type="scientific">Shigella boydii serotype 4 (strain Sb227)</name>
    <dbReference type="NCBI Taxonomy" id="300268"/>
    <lineage>
        <taxon>Bacteria</taxon>
        <taxon>Pseudomonadati</taxon>
        <taxon>Pseudomonadota</taxon>
        <taxon>Gammaproteobacteria</taxon>
        <taxon>Enterobacterales</taxon>
        <taxon>Enterobacteriaceae</taxon>
        <taxon>Shigella</taxon>
    </lineage>
</organism>
<comment type="function">
    <text evidence="1">Involved in peptide bond synthesis. Alleviates ribosome stalling that occurs when 3 or more consecutive Pro residues or the sequence PPG is present in a protein, possibly by augmenting the peptidyl transferase activity of the ribosome. Modification of Lys-34 is required for alleviation.</text>
</comment>
<comment type="pathway">
    <text evidence="1">Protein biosynthesis; polypeptide chain elongation.</text>
</comment>
<comment type="subcellular location">
    <subcellularLocation>
        <location evidence="1">Cytoplasm</location>
    </subcellularLocation>
</comment>
<comment type="PTM">
    <text evidence="1">Is beta-lysylated on the epsilon-amino group of Lys-34 by the combined action of EpmA and EpmB, and then hydroxylated on the C5 position of the same residue by EpmC. Lysylation is critical for the stimulatory effect of EF-P on peptide-bond formation. The lysylation moiety would extend toward the peptidyltransferase center and stabilize the terminal 3-CCA end of the tRNA. The hydroxylation of the C5 position on Lys-34 would allow additional potential stabilizing hydrogen-bond interactions with the P-tRNA.</text>
</comment>
<comment type="similarity">
    <text evidence="1">Belongs to the elongation factor P family.</text>
</comment>
<evidence type="ECO:0000255" key="1">
    <source>
        <dbReference type="HAMAP-Rule" id="MF_00141"/>
    </source>
</evidence>
<keyword id="KW-0963">Cytoplasm</keyword>
<keyword id="KW-0251">Elongation factor</keyword>
<keyword id="KW-0379">Hydroxylation</keyword>
<keyword id="KW-0648">Protein biosynthesis</keyword>